<dbReference type="EC" id="1.10.3.-"/>
<dbReference type="EMBL" id="CP000255">
    <property type="protein sequence ID" value="ABD22477.1"/>
    <property type="molecule type" value="Genomic_DNA"/>
</dbReference>
<dbReference type="RefSeq" id="WP_000032836.1">
    <property type="nucleotide sequence ID" value="NZ_CP027476.1"/>
</dbReference>
<dbReference type="SMR" id="Q2FI17"/>
<dbReference type="KEGG" id="saa:SAUSA300_0963"/>
<dbReference type="HOGENOM" id="CLU_036876_6_0_9"/>
<dbReference type="OMA" id="TAMNSFF"/>
<dbReference type="Proteomes" id="UP000001939">
    <property type="component" value="Chromosome"/>
</dbReference>
<dbReference type="GO" id="GO:0005886">
    <property type="term" value="C:plasma membrane"/>
    <property type="evidence" value="ECO:0007669"/>
    <property type="project" value="UniProtKB-SubCell"/>
</dbReference>
<dbReference type="GO" id="GO:0005507">
    <property type="term" value="F:copper ion binding"/>
    <property type="evidence" value="ECO:0007669"/>
    <property type="project" value="InterPro"/>
</dbReference>
<dbReference type="GO" id="GO:0009486">
    <property type="term" value="F:cytochrome bo3 ubiquinol oxidase activity"/>
    <property type="evidence" value="ECO:0007669"/>
    <property type="project" value="InterPro"/>
</dbReference>
<dbReference type="GO" id="GO:0004129">
    <property type="term" value="F:cytochrome-c oxidase activity"/>
    <property type="evidence" value="ECO:0007669"/>
    <property type="project" value="InterPro"/>
</dbReference>
<dbReference type="GO" id="GO:0016682">
    <property type="term" value="F:oxidoreductase activity, acting on diphenols and related substances as donors, oxygen as acceptor"/>
    <property type="evidence" value="ECO:0007669"/>
    <property type="project" value="InterPro"/>
</dbReference>
<dbReference type="GO" id="GO:0042773">
    <property type="term" value="P:ATP synthesis coupled electron transport"/>
    <property type="evidence" value="ECO:0007669"/>
    <property type="project" value="TreeGrafter"/>
</dbReference>
<dbReference type="CDD" id="cd04212">
    <property type="entry name" value="CuRO_UO_II"/>
    <property type="match status" value="1"/>
</dbReference>
<dbReference type="FunFam" id="2.60.40.420:FF:000014">
    <property type="entry name" value="Quinol oxidase subunit 2"/>
    <property type="match status" value="1"/>
</dbReference>
<dbReference type="Gene3D" id="1.10.287.90">
    <property type="match status" value="1"/>
</dbReference>
<dbReference type="Gene3D" id="2.60.40.420">
    <property type="entry name" value="Cupredoxins - blue copper proteins"/>
    <property type="match status" value="1"/>
</dbReference>
<dbReference type="InterPro" id="IPR045187">
    <property type="entry name" value="CcO_II"/>
</dbReference>
<dbReference type="InterPro" id="IPR002429">
    <property type="entry name" value="CcO_II-like_C"/>
</dbReference>
<dbReference type="InterPro" id="IPR008972">
    <property type="entry name" value="Cupredoxin"/>
</dbReference>
<dbReference type="InterPro" id="IPR034227">
    <property type="entry name" value="CuRO_UO_II"/>
</dbReference>
<dbReference type="InterPro" id="IPR011759">
    <property type="entry name" value="Cyt_c_oxidase_su2_TM_dom"/>
</dbReference>
<dbReference type="InterPro" id="IPR036257">
    <property type="entry name" value="Cyt_c_oxidase_su2_TM_sf"/>
</dbReference>
<dbReference type="InterPro" id="IPR006332">
    <property type="entry name" value="QoxA"/>
</dbReference>
<dbReference type="NCBIfam" id="TIGR01432">
    <property type="entry name" value="QOXA"/>
    <property type="match status" value="1"/>
</dbReference>
<dbReference type="PANTHER" id="PTHR22888:SF18">
    <property type="entry name" value="CYTOCHROME BO(3) UBIQUINOL OXIDASE SUBUNIT 2"/>
    <property type="match status" value="1"/>
</dbReference>
<dbReference type="PANTHER" id="PTHR22888">
    <property type="entry name" value="CYTOCHROME C OXIDASE, SUBUNIT II"/>
    <property type="match status" value="1"/>
</dbReference>
<dbReference type="Pfam" id="PF02790">
    <property type="entry name" value="COX2_TM"/>
    <property type="match status" value="1"/>
</dbReference>
<dbReference type="SUPFAM" id="SSF49503">
    <property type="entry name" value="Cupredoxins"/>
    <property type="match status" value="1"/>
</dbReference>
<dbReference type="SUPFAM" id="SSF81464">
    <property type="entry name" value="Cytochrome c oxidase subunit II-like, transmembrane region"/>
    <property type="match status" value="1"/>
</dbReference>
<dbReference type="PROSITE" id="PS50857">
    <property type="entry name" value="COX2_CUA"/>
    <property type="match status" value="1"/>
</dbReference>
<dbReference type="PROSITE" id="PS50999">
    <property type="entry name" value="COX2_TM"/>
    <property type="match status" value="1"/>
</dbReference>
<dbReference type="PROSITE" id="PS51257">
    <property type="entry name" value="PROKAR_LIPOPROTEIN"/>
    <property type="match status" value="1"/>
</dbReference>
<protein>
    <recommendedName>
        <fullName>Probable quinol oxidase subunit 2</fullName>
        <ecNumber>1.10.3.-</ecNumber>
    </recommendedName>
    <alternativeName>
        <fullName>Quinol oxidase polypeptide II</fullName>
    </alternativeName>
</protein>
<sequence length="366" mass="41777">MSKFKSLLLLFGTLILLSGCSNIEIFNAKGPVASSQKFLILYSIVFMLVICFVVLGMFAIFIYKYSYNKNAESGKMHHNAIIETIWFVIPIIIVAALAIPTVKTLYDYEKPPKSEKDPMVVYAVSAGYKWFFAYPDEHIETVNTLTIPKDRPVVFKLQAMDTMTSFWIPQLGGQKYAMTGMTMNWTLEASQTGTFRGRNSNFNGEGFSRQTFKVNAVSQKDYDKWVKEVKGKKTLDQDTFDKQLLPSTPNKALEFNGTHMAFVDPAADPEYIFYAYKRFNFELKDPNFTSEENMFKDVSDKPLIPARKAQITNANYKRHGMKLMILGNDEPYNNEFKKDESKNAKEMKKISKDAQDQDNDDHGGGH</sequence>
<proteinExistence type="inferred from homology"/>
<name>QOX2_STAA3</name>
<feature type="signal peptide" evidence="3">
    <location>
        <begin position="1"/>
        <end position="19"/>
    </location>
</feature>
<feature type="chain" id="PRO_0000275879" description="Probable quinol oxidase subunit 2">
    <location>
        <begin position="20"/>
        <end position="366"/>
    </location>
</feature>
<feature type="transmembrane region" description="Helical" evidence="2">
    <location>
        <begin position="38"/>
        <end position="58"/>
    </location>
</feature>
<feature type="transmembrane region" description="Helical" evidence="2">
    <location>
        <begin position="80"/>
        <end position="100"/>
    </location>
</feature>
<feature type="region of interest" description="Disordered" evidence="4">
    <location>
        <begin position="330"/>
        <end position="366"/>
    </location>
</feature>
<feature type="compositionally biased region" description="Basic and acidic residues" evidence="4">
    <location>
        <begin position="335"/>
        <end position="366"/>
    </location>
</feature>
<feature type="lipid moiety-binding region" description="N-palmitoyl cysteine" evidence="3">
    <location>
        <position position="20"/>
    </location>
</feature>
<feature type="lipid moiety-binding region" description="S-diacylglycerol cysteine" evidence="3">
    <location>
        <position position="20"/>
    </location>
</feature>
<gene>
    <name type="primary">qoxA</name>
    <name type="ordered locus">SAUSA300_0963</name>
</gene>
<comment type="function">
    <text evidence="1">Catalyzes quinol oxidation with the concomitant reduction of oxygen to water. Subunit II transfers the electrons from a quinol to the binuclear center of the catalytic subunit I (By similarity).</text>
</comment>
<comment type="catalytic activity">
    <reaction>
        <text>2 a quinol + O2 = 2 a quinone + 2 H2O</text>
        <dbReference type="Rhea" id="RHEA:55376"/>
        <dbReference type="ChEBI" id="CHEBI:15377"/>
        <dbReference type="ChEBI" id="CHEBI:15379"/>
        <dbReference type="ChEBI" id="CHEBI:24646"/>
        <dbReference type="ChEBI" id="CHEBI:132124"/>
    </reaction>
</comment>
<comment type="subcellular location">
    <subcellularLocation>
        <location evidence="3">Cell membrane</location>
        <topology evidence="1">Multi-pass membrane protein</topology>
    </subcellularLocation>
</comment>
<comment type="similarity">
    <text evidence="5">Belongs to the cytochrome c oxidase subunit 2 family.</text>
</comment>
<keyword id="KW-1003">Cell membrane</keyword>
<keyword id="KW-0249">Electron transport</keyword>
<keyword id="KW-0449">Lipoprotein</keyword>
<keyword id="KW-0472">Membrane</keyword>
<keyword id="KW-0560">Oxidoreductase</keyword>
<keyword id="KW-0564">Palmitate</keyword>
<keyword id="KW-0679">Respiratory chain</keyword>
<keyword id="KW-0732">Signal</keyword>
<keyword id="KW-0812">Transmembrane</keyword>
<keyword id="KW-1133">Transmembrane helix</keyword>
<keyword id="KW-0813">Transport</keyword>
<accession>Q2FI17</accession>
<organism>
    <name type="scientific">Staphylococcus aureus (strain USA300)</name>
    <dbReference type="NCBI Taxonomy" id="367830"/>
    <lineage>
        <taxon>Bacteria</taxon>
        <taxon>Bacillati</taxon>
        <taxon>Bacillota</taxon>
        <taxon>Bacilli</taxon>
        <taxon>Bacillales</taxon>
        <taxon>Staphylococcaceae</taxon>
        <taxon>Staphylococcus</taxon>
    </lineage>
</organism>
<reference key="1">
    <citation type="journal article" date="2006" name="Lancet">
        <title>Complete genome sequence of USA300, an epidemic clone of community-acquired meticillin-resistant Staphylococcus aureus.</title>
        <authorList>
            <person name="Diep B.A."/>
            <person name="Gill S.R."/>
            <person name="Chang R.F."/>
            <person name="Phan T.H."/>
            <person name="Chen J.H."/>
            <person name="Davidson M.G."/>
            <person name="Lin F."/>
            <person name="Lin J."/>
            <person name="Carleton H.A."/>
            <person name="Mongodin E.F."/>
            <person name="Sensabaugh G.F."/>
            <person name="Perdreau-Remington F."/>
        </authorList>
    </citation>
    <scope>NUCLEOTIDE SEQUENCE [LARGE SCALE GENOMIC DNA]</scope>
    <source>
        <strain>USA300</strain>
    </source>
</reference>
<evidence type="ECO:0000250" key="1"/>
<evidence type="ECO:0000255" key="2"/>
<evidence type="ECO:0000255" key="3">
    <source>
        <dbReference type="PROSITE-ProRule" id="PRU00303"/>
    </source>
</evidence>
<evidence type="ECO:0000256" key="4">
    <source>
        <dbReference type="SAM" id="MobiDB-lite"/>
    </source>
</evidence>
<evidence type="ECO:0000305" key="5"/>